<evidence type="ECO:0000255" key="1">
    <source>
        <dbReference type="HAMAP-Rule" id="MF_00141"/>
    </source>
</evidence>
<name>EFP_PROMP</name>
<reference key="1">
    <citation type="journal article" date="2003" name="Nature">
        <title>Genome divergence in two Prochlorococcus ecotypes reflects oceanic niche differentiation.</title>
        <authorList>
            <person name="Rocap G."/>
            <person name="Larimer F.W."/>
            <person name="Lamerdin J.E."/>
            <person name="Malfatti S."/>
            <person name="Chain P."/>
            <person name="Ahlgren N.A."/>
            <person name="Arellano A."/>
            <person name="Coleman M."/>
            <person name="Hauser L."/>
            <person name="Hess W.R."/>
            <person name="Johnson Z.I."/>
            <person name="Land M.L."/>
            <person name="Lindell D."/>
            <person name="Post A.F."/>
            <person name="Regala W."/>
            <person name="Shah M."/>
            <person name="Shaw S.L."/>
            <person name="Steglich C."/>
            <person name="Sullivan M.B."/>
            <person name="Ting C.S."/>
            <person name="Tolonen A."/>
            <person name="Webb E.A."/>
            <person name="Zinser E.R."/>
            <person name="Chisholm S.W."/>
        </authorList>
    </citation>
    <scope>NUCLEOTIDE SEQUENCE [LARGE SCALE GENOMIC DNA]</scope>
    <source>
        <strain>CCMP1986 / NIES-2087 / MED4</strain>
    </source>
</reference>
<gene>
    <name evidence="1" type="primary">efp</name>
    <name type="ordered locus">PMM0026</name>
</gene>
<comment type="function">
    <text evidence="1">Involved in peptide bond synthesis. Stimulates efficient translation and peptide-bond synthesis on native or reconstituted 70S ribosomes in vitro. Probably functions indirectly by altering the affinity of the ribosome for aminoacyl-tRNA, thus increasing their reactivity as acceptors for peptidyl transferase.</text>
</comment>
<comment type="pathway">
    <text evidence="1">Protein biosynthesis; polypeptide chain elongation.</text>
</comment>
<comment type="subcellular location">
    <subcellularLocation>
        <location evidence="1">Cytoplasm</location>
    </subcellularLocation>
</comment>
<comment type="similarity">
    <text evidence="1">Belongs to the elongation factor P family.</text>
</comment>
<accession>Q7V3P5</accession>
<protein>
    <recommendedName>
        <fullName evidence="1">Elongation factor P</fullName>
        <shortName evidence="1">EF-P</shortName>
    </recommendedName>
</protein>
<proteinExistence type="inferred from homology"/>
<organism>
    <name type="scientific">Prochlorococcus marinus subsp. pastoris (strain CCMP1986 / NIES-2087 / MED4)</name>
    <dbReference type="NCBI Taxonomy" id="59919"/>
    <lineage>
        <taxon>Bacteria</taxon>
        <taxon>Bacillati</taxon>
        <taxon>Cyanobacteriota</taxon>
        <taxon>Cyanophyceae</taxon>
        <taxon>Synechococcales</taxon>
        <taxon>Prochlorococcaceae</taxon>
        <taxon>Prochlorococcus</taxon>
    </lineage>
</organism>
<keyword id="KW-0963">Cytoplasm</keyword>
<keyword id="KW-0251">Elongation factor</keyword>
<keyword id="KW-0648">Protein biosynthesis</keyword>
<sequence length="186" mass="20616">MISSNDFRTGTTIEIDGQVWRVVEFLHVKPGKGSAFVRTKLKSVRNGNVVEKTFRAGESVQQAVLEKSNLQHTYVESGDYVFMDMISFEETRLSSDQIGRGSKYLKEGMEVNVIFYKDKVLEVELPISITLKVTETDPGVKGDTASGGTKPAILETGAQVMVPLFISVGEMIKVDTRNDSYLGRDN</sequence>
<feature type="chain" id="PRO_0000094309" description="Elongation factor P">
    <location>
        <begin position="1"/>
        <end position="186"/>
    </location>
</feature>
<dbReference type="EMBL" id="BX548174">
    <property type="protein sequence ID" value="CAE18485.1"/>
    <property type="molecule type" value="Genomic_DNA"/>
</dbReference>
<dbReference type="RefSeq" id="WP_011131664.1">
    <property type="nucleotide sequence ID" value="NC_005072.1"/>
</dbReference>
<dbReference type="SMR" id="Q7V3P5"/>
<dbReference type="STRING" id="59919.PMM0026"/>
<dbReference type="KEGG" id="pmm:PMM0026"/>
<dbReference type="eggNOG" id="COG0231">
    <property type="taxonomic scope" value="Bacteria"/>
</dbReference>
<dbReference type="HOGENOM" id="CLU_074944_0_1_3"/>
<dbReference type="OrthoDB" id="9801844at2"/>
<dbReference type="UniPathway" id="UPA00345"/>
<dbReference type="Proteomes" id="UP000001026">
    <property type="component" value="Chromosome"/>
</dbReference>
<dbReference type="GO" id="GO:0005737">
    <property type="term" value="C:cytoplasm"/>
    <property type="evidence" value="ECO:0007669"/>
    <property type="project" value="UniProtKB-SubCell"/>
</dbReference>
<dbReference type="GO" id="GO:0003746">
    <property type="term" value="F:translation elongation factor activity"/>
    <property type="evidence" value="ECO:0007669"/>
    <property type="project" value="UniProtKB-UniRule"/>
</dbReference>
<dbReference type="GO" id="GO:0043043">
    <property type="term" value="P:peptide biosynthetic process"/>
    <property type="evidence" value="ECO:0007669"/>
    <property type="project" value="InterPro"/>
</dbReference>
<dbReference type="CDD" id="cd04470">
    <property type="entry name" value="S1_EF-P_repeat_1"/>
    <property type="match status" value="1"/>
</dbReference>
<dbReference type="CDD" id="cd05794">
    <property type="entry name" value="S1_EF-P_repeat_2"/>
    <property type="match status" value="1"/>
</dbReference>
<dbReference type="FunFam" id="2.30.30.30:FF:000003">
    <property type="entry name" value="Elongation factor P"/>
    <property type="match status" value="1"/>
</dbReference>
<dbReference type="FunFam" id="2.40.50.140:FF:000004">
    <property type="entry name" value="Elongation factor P"/>
    <property type="match status" value="1"/>
</dbReference>
<dbReference type="FunFam" id="2.40.50.140:FF:000009">
    <property type="entry name" value="Elongation factor P"/>
    <property type="match status" value="1"/>
</dbReference>
<dbReference type="Gene3D" id="2.30.30.30">
    <property type="match status" value="1"/>
</dbReference>
<dbReference type="Gene3D" id="2.40.50.140">
    <property type="entry name" value="Nucleic acid-binding proteins"/>
    <property type="match status" value="2"/>
</dbReference>
<dbReference type="HAMAP" id="MF_00141">
    <property type="entry name" value="EF_P"/>
    <property type="match status" value="1"/>
</dbReference>
<dbReference type="InterPro" id="IPR015365">
    <property type="entry name" value="Elong-fact-P_C"/>
</dbReference>
<dbReference type="InterPro" id="IPR012340">
    <property type="entry name" value="NA-bd_OB-fold"/>
</dbReference>
<dbReference type="InterPro" id="IPR014722">
    <property type="entry name" value="Rib_uL2_dom2"/>
</dbReference>
<dbReference type="InterPro" id="IPR020599">
    <property type="entry name" value="Transl_elong_fac_P/YeiP"/>
</dbReference>
<dbReference type="InterPro" id="IPR013185">
    <property type="entry name" value="Transl_elong_KOW-like"/>
</dbReference>
<dbReference type="InterPro" id="IPR001059">
    <property type="entry name" value="Transl_elong_P/YeiP_cen"/>
</dbReference>
<dbReference type="InterPro" id="IPR013852">
    <property type="entry name" value="Transl_elong_P/YeiP_CS"/>
</dbReference>
<dbReference type="InterPro" id="IPR011768">
    <property type="entry name" value="Transl_elongation_fac_P"/>
</dbReference>
<dbReference type="InterPro" id="IPR008991">
    <property type="entry name" value="Translation_prot_SH3-like_sf"/>
</dbReference>
<dbReference type="NCBIfam" id="TIGR00038">
    <property type="entry name" value="efp"/>
    <property type="match status" value="1"/>
</dbReference>
<dbReference type="NCBIfam" id="NF001810">
    <property type="entry name" value="PRK00529.1"/>
    <property type="match status" value="1"/>
</dbReference>
<dbReference type="PANTHER" id="PTHR30053">
    <property type="entry name" value="ELONGATION FACTOR P"/>
    <property type="match status" value="1"/>
</dbReference>
<dbReference type="PANTHER" id="PTHR30053:SF12">
    <property type="entry name" value="ELONGATION FACTOR P (EF-P) FAMILY PROTEIN"/>
    <property type="match status" value="1"/>
</dbReference>
<dbReference type="Pfam" id="PF01132">
    <property type="entry name" value="EFP"/>
    <property type="match status" value="1"/>
</dbReference>
<dbReference type="Pfam" id="PF08207">
    <property type="entry name" value="EFP_N"/>
    <property type="match status" value="1"/>
</dbReference>
<dbReference type="Pfam" id="PF09285">
    <property type="entry name" value="Elong-fact-P_C"/>
    <property type="match status" value="1"/>
</dbReference>
<dbReference type="PIRSF" id="PIRSF005901">
    <property type="entry name" value="EF-P"/>
    <property type="match status" value="1"/>
</dbReference>
<dbReference type="SMART" id="SM01185">
    <property type="entry name" value="EFP"/>
    <property type="match status" value="1"/>
</dbReference>
<dbReference type="SMART" id="SM00841">
    <property type="entry name" value="Elong-fact-P_C"/>
    <property type="match status" value="1"/>
</dbReference>
<dbReference type="SUPFAM" id="SSF50249">
    <property type="entry name" value="Nucleic acid-binding proteins"/>
    <property type="match status" value="2"/>
</dbReference>
<dbReference type="SUPFAM" id="SSF50104">
    <property type="entry name" value="Translation proteins SH3-like domain"/>
    <property type="match status" value="1"/>
</dbReference>
<dbReference type="PROSITE" id="PS01275">
    <property type="entry name" value="EFP"/>
    <property type="match status" value="1"/>
</dbReference>